<protein>
    <recommendedName>
        <fullName evidence="2">Small ribosomal subunit protein uS12</fullName>
    </recommendedName>
    <alternativeName>
        <fullName evidence="3">30S ribosomal protein S12</fullName>
    </alternativeName>
</protein>
<accession>Q7WRC9</accession>
<comment type="function">
    <text evidence="2">With S4 and S5 plays an important role in translational accuracy.</text>
</comment>
<comment type="function">
    <text evidence="2">Interacts with and stabilizes bases of the 16S rRNA that are involved in tRNA selection in the A site and with the mRNA backbone. Located at the interface of the 30S and 50S subunits, it traverses the body of the 30S subunit contacting proteins on the other side and probably holding the rRNA structure together. The combined cluster of proteins S8, S12 and S17 appears to hold together the shoulder and platform of the 30S subunit.</text>
</comment>
<comment type="subunit">
    <text evidence="2">Part of the 30S ribosomal subunit. Contacts proteins S8 and S17. May interact with IF1 in the 30S initiation complex.</text>
</comment>
<comment type="similarity">
    <text evidence="2">Belongs to the universal ribosomal protein uS12 family.</text>
</comment>
<comment type="sequence caution" evidence="3">
    <conflict type="erroneous initiation">
        <sequence resource="EMBL-CDS" id="CAE30526"/>
    </conflict>
</comment>
<dbReference type="EMBL" id="BX640437">
    <property type="protein sequence ID" value="CAE30526.1"/>
    <property type="status" value="ALT_INIT"/>
    <property type="molecule type" value="Genomic_DNA"/>
</dbReference>
<dbReference type="RefSeq" id="WP_005017264.1">
    <property type="nucleotide sequence ID" value="NC_002927.3"/>
</dbReference>
<dbReference type="SMR" id="Q7WRC9"/>
<dbReference type="GeneID" id="94357751"/>
<dbReference type="KEGG" id="bbr:BB0024"/>
<dbReference type="eggNOG" id="COG0048">
    <property type="taxonomic scope" value="Bacteria"/>
</dbReference>
<dbReference type="HOGENOM" id="CLU_104295_1_2_4"/>
<dbReference type="Proteomes" id="UP000001027">
    <property type="component" value="Chromosome"/>
</dbReference>
<dbReference type="GO" id="GO:0015935">
    <property type="term" value="C:small ribosomal subunit"/>
    <property type="evidence" value="ECO:0007669"/>
    <property type="project" value="InterPro"/>
</dbReference>
<dbReference type="GO" id="GO:0019843">
    <property type="term" value="F:rRNA binding"/>
    <property type="evidence" value="ECO:0007669"/>
    <property type="project" value="UniProtKB-UniRule"/>
</dbReference>
<dbReference type="GO" id="GO:0003735">
    <property type="term" value="F:structural constituent of ribosome"/>
    <property type="evidence" value="ECO:0007669"/>
    <property type="project" value="InterPro"/>
</dbReference>
<dbReference type="GO" id="GO:0000049">
    <property type="term" value="F:tRNA binding"/>
    <property type="evidence" value="ECO:0007669"/>
    <property type="project" value="UniProtKB-UniRule"/>
</dbReference>
<dbReference type="GO" id="GO:0006412">
    <property type="term" value="P:translation"/>
    <property type="evidence" value="ECO:0007669"/>
    <property type="project" value="UniProtKB-UniRule"/>
</dbReference>
<dbReference type="CDD" id="cd03368">
    <property type="entry name" value="Ribosomal_S12"/>
    <property type="match status" value="1"/>
</dbReference>
<dbReference type="FunFam" id="2.40.50.140:FF:000001">
    <property type="entry name" value="30S ribosomal protein S12"/>
    <property type="match status" value="1"/>
</dbReference>
<dbReference type="Gene3D" id="2.40.50.140">
    <property type="entry name" value="Nucleic acid-binding proteins"/>
    <property type="match status" value="1"/>
</dbReference>
<dbReference type="HAMAP" id="MF_00403_B">
    <property type="entry name" value="Ribosomal_uS12_B"/>
    <property type="match status" value="1"/>
</dbReference>
<dbReference type="InterPro" id="IPR012340">
    <property type="entry name" value="NA-bd_OB-fold"/>
</dbReference>
<dbReference type="InterPro" id="IPR006032">
    <property type="entry name" value="Ribosomal_uS12"/>
</dbReference>
<dbReference type="InterPro" id="IPR005679">
    <property type="entry name" value="Ribosomal_uS12_bac"/>
</dbReference>
<dbReference type="NCBIfam" id="TIGR00981">
    <property type="entry name" value="rpsL_bact"/>
    <property type="match status" value="1"/>
</dbReference>
<dbReference type="PANTHER" id="PTHR11652">
    <property type="entry name" value="30S RIBOSOMAL PROTEIN S12 FAMILY MEMBER"/>
    <property type="match status" value="1"/>
</dbReference>
<dbReference type="Pfam" id="PF00164">
    <property type="entry name" value="Ribosom_S12_S23"/>
    <property type="match status" value="1"/>
</dbReference>
<dbReference type="PIRSF" id="PIRSF002133">
    <property type="entry name" value="Ribosomal_S12/S23"/>
    <property type="match status" value="1"/>
</dbReference>
<dbReference type="PRINTS" id="PR01034">
    <property type="entry name" value="RIBOSOMALS12"/>
</dbReference>
<dbReference type="SUPFAM" id="SSF50249">
    <property type="entry name" value="Nucleic acid-binding proteins"/>
    <property type="match status" value="1"/>
</dbReference>
<dbReference type="PROSITE" id="PS00055">
    <property type="entry name" value="RIBOSOMAL_S12"/>
    <property type="match status" value="1"/>
</dbReference>
<name>RS12_BORBR</name>
<keyword id="KW-0488">Methylation</keyword>
<keyword id="KW-0687">Ribonucleoprotein</keyword>
<keyword id="KW-0689">Ribosomal protein</keyword>
<keyword id="KW-0694">RNA-binding</keyword>
<keyword id="KW-0699">rRNA-binding</keyword>
<keyword id="KW-0820">tRNA-binding</keyword>
<gene>
    <name evidence="2" type="primary">rpsL</name>
    <name type="ordered locus">BB0024</name>
</gene>
<evidence type="ECO:0000250" key="1"/>
<evidence type="ECO:0000255" key="2">
    <source>
        <dbReference type="HAMAP-Rule" id="MF_00403"/>
    </source>
</evidence>
<evidence type="ECO:0000305" key="3"/>
<organism>
    <name type="scientific">Bordetella bronchiseptica (strain ATCC BAA-588 / NCTC 13252 / RB50)</name>
    <name type="common">Alcaligenes bronchisepticus</name>
    <dbReference type="NCBI Taxonomy" id="257310"/>
    <lineage>
        <taxon>Bacteria</taxon>
        <taxon>Pseudomonadati</taxon>
        <taxon>Pseudomonadota</taxon>
        <taxon>Betaproteobacteria</taxon>
        <taxon>Burkholderiales</taxon>
        <taxon>Alcaligenaceae</taxon>
        <taxon>Bordetella</taxon>
    </lineage>
</organism>
<reference key="1">
    <citation type="journal article" date="2003" name="Nat. Genet.">
        <title>Comparative analysis of the genome sequences of Bordetella pertussis, Bordetella parapertussis and Bordetella bronchiseptica.</title>
        <authorList>
            <person name="Parkhill J."/>
            <person name="Sebaihia M."/>
            <person name="Preston A."/>
            <person name="Murphy L.D."/>
            <person name="Thomson N.R."/>
            <person name="Harris D.E."/>
            <person name="Holden M.T.G."/>
            <person name="Churcher C.M."/>
            <person name="Bentley S.D."/>
            <person name="Mungall K.L."/>
            <person name="Cerdeno-Tarraga A.-M."/>
            <person name="Temple L."/>
            <person name="James K.D."/>
            <person name="Harris B."/>
            <person name="Quail M.A."/>
            <person name="Achtman M."/>
            <person name="Atkin R."/>
            <person name="Baker S."/>
            <person name="Basham D."/>
            <person name="Bason N."/>
            <person name="Cherevach I."/>
            <person name="Chillingworth T."/>
            <person name="Collins M."/>
            <person name="Cronin A."/>
            <person name="Davis P."/>
            <person name="Doggett J."/>
            <person name="Feltwell T."/>
            <person name="Goble A."/>
            <person name="Hamlin N."/>
            <person name="Hauser H."/>
            <person name="Holroyd S."/>
            <person name="Jagels K."/>
            <person name="Leather S."/>
            <person name="Moule S."/>
            <person name="Norberczak H."/>
            <person name="O'Neil S."/>
            <person name="Ormond D."/>
            <person name="Price C."/>
            <person name="Rabbinowitsch E."/>
            <person name="Rutter S."/>
            <person name="Sanders M."/>
            <person name="Saunders D."/>
            <person name="Seeger K."/>
            <person name="Sharp S."/>
            <person name="Simmonds M."/>
            <person name="Skelton J."/>
            <person name="Squares R."/>
            <person name="Squares S."/>
            <person name="Stevens K."/>
            <person name="Unwin L."/>
            <person name="Whitehead S."/>
            <person name="Barrell B.G."/>
            <person name="Maskell D.J."/>
        </authorList>
    </citation>
    <scope>NUCLEOTIDE SEQUENCE [LARGE SCALE GENOMIC DNA]</scope>
    <source>
        <strain>ATCC BAA-588 / NCTC 13252 / RB50</strain>
    </source>
</reference>
<proteinExistence type="inferred from homology"/>
<sequence>MPTISQLVRKPREVSIIKSKSPALENCPQRRGVCTRVYTTTPKKPNSALRKVAKVRLTNGYEVISYIGGEGHNLQEHSVVLVRGGRVKDLPGVRYHIVRGSLDLQGVKDRKQARSKYGAKRPKKA</sequence>
<feature type="chain" id="PRO_0000146184" description="Small ribosomal subunit protein uS12">
    <location>
        <begin position="1"/>
        <end position="125"/>
    </location>
</feature>
<feature type="modified residue" description="3-methylthioaspartic acid" evidence="1">
    <location>
        <position position="89"/>
    </location>
</feature>